<evidence type="ECO:0000250" key="1"/>
<evidence type="ECO:0000250" key="2">
    <source>
        <dbReference type="UniProtKB" id="P40763"/>
    </source>
</evidence>
<evidence type="ECO:0000255" key="3"/>
<evidence type="ECO:0000255" key="4">
    <source>
        <dbReference type="PROSITE-ProRule" id="PRU00191"/>
    </source>
</evidence>
<evidence type="ECO:0000269" key="5">
    <source>
    </source>
</evidence>
<evidence type="ECO:0000269" key="6">
    <source>
    </source>
</evidence>
<evidence type="ECO:0000269" key="7">
    <source>
    </source>
</evidence>
<evidence type="ECO:0000303" key="8">
    <source>
    </source>
</evidence>
<evidence type="ECO:0000305" key="9"/>
<evidence type="ECO:0000312" key="10">
    <source>
        <dbReference type="EMBL" id="AAI69718.1"/>
    </source>
</evidence>
<evidence type="ECO:0000312" key="11">
    <source>
        <dbReference type="EMBL" id="BAA86061.1"/>
    </source>
</evidence>
<keyword id="KW-0010">Activator</keyword>
<keyword id="KW-0963">Cytoplasm</keyword>
<keyword id="KW-0217">Developmental protein</keyword>
<keyword id="KW-0238">DNA-binding</keyword>
<keyword id="KW-0539">Nucleus</keyword>
<keyword id="KW-0597">Phosphoprotein</keyword>
<keyword id="KW-1185">Reference proteome</keyword>
<keyword id="KW-0727">SH2 domain</keyword>
<keyword id="KW-0804">Transcription</keyword>
<keyword id="KW-0805">Transcription regulation</keyword>
<comment type="function">
    <text evidence="6 7">Transcription factor that binds to target promoter sequences and activates transcription upon il6st/gp130 stimulation. Mediates ventralization of embryos, at least in part via inhibition of smad2 signaling. Required for hairy2 to induce dll1/delta1 and promote neural crest cell proliferation and differentiation. Involved in TGFbeta-mediated mesoderm induction in early embryos, acting downstream of map3k7/tak1 and nlk.2.</text>
</comment>
<comment type="subunit">
    <text evidence="2 6">Forms a homodimer or a heterodimer with a related family member, such as stat1 (By similarity). Interacts with nlk.2.</text>
</comment>
<comment type="subcellular location">
    <subcellularLocation>
        <location evidence="2">Cytoplasm</location>
    </subcellularLocation>
    <subcellularLocation>
        <location evidence="2">Nucleus</location>
    </subcellularLocation>
    <text evidence="1">Shuttles between the nucleus and the cytoplasm. Constitutive nuclear presence is independent of tyrosine phosphorylation (By similarity).</text>
</comment>
<comment type="developmental stage">
    <text evidence="5">Expressed from the one-cell stage throughout embryogenesis (at protein level). Expressed fairly ubiquitously up to the gastrula stage, then restricted mainly to the nervous system later in development.</text>
</comment>
<comment type="PTM">
    <text evidence="6">Phosphorylation of both tyrosine and serine residues, together with dimerization, is required for mesoderm induction.</text>
</comment>
<comment type="miscellaneous">
    <text evidence="5">Involved in the gp130-mediated signaling pathway.</text>
</comment>
<comment type="similarity">
    <text evidence="3">Belongs to the transcription factor STAT family.</text>
</comment>
<name>STA31_XENLA</name>
<reference evidence="9 11" key="1">
    <citation type="journal article" date="1999" name="Dev. Biol.">
        <title>Activation of Stat3 by cytokine receptor gp130 ventralizes Xenopus embryos independent of BMP-4.</title>
        <authorList>
            <person name="Nishinakamura R."/>
            <person name="Matsumoto Y."/>
            <person name="Matsuda T."/>
            <person name="Ariizumi T."/>
            <person name="Heike T."/>
            <person name="Asashima M."/>
            <person name="Yokota T."/>
        </authorList>
    </citation>
    <scope>NUCLEOTIDE SEQUENCE [MRNA]</scope>
    <scope>DEVELOPMENTAL STAGE</scope>
    <source>
        <tissue evidence="5">Embryo</tissue>
    </source>
</reference>
<reference evidence="10" key="2">
    <citation type="submission" date="2008-11" db="EMBL/GenBank/DDBJ databases">
        <authorList>
            <consortium name="NIH - Xenopus Gene Collection (XGC) project"/>
        </authorList>
    </citation>
    <scope>NUCLEOTIDE SEQUENCE [LARGE SCALE MRNA]</scope>
    <source>
        <tissue evidence="10">Embryo</tissue>
    </source>
</reference>
<reference evidence="9" key="3">
    <citation type="journal article" date="2004" name="Genes Dev.">
        <title>Role of the TAK1-NLK-STAT3 pathway in TGF-beta-mediated mesoderm induction.</title>
        <authorList>
            <person name="Ohkawara B."/>
            <person name="Shirakabe K."/>
            <person name="Hyodo-Miura J."/>
            <person name="Matsuo R."/>
            <person name="Ueno N."/>
            <person name="Matsumoto K."/>
            <person name="Shibuya H."/>
        </authorList>
    </citation>
    <scope>FUNCTION</scope>
    <scope>INTERACTION WITH NLK.2</scope>
    <scope>PHOSPHORYLATION AT SER-728</scope>
    <scope>MUTAGENESIS OF 662-ALA--ASN-664; TYR-706 AND SER-728</scope>
</reference>
<reference evidence="9" key="4">
    <citation type="journal article" date="2008" name="Dev. Biol.">
        <title>Hairy2 functions through both DNA-binding and non DNA-binding mechanisms at the neural plate border in Xenopus.</title>
        <authorList>
            <person name="Nichane M."/>
            <person name="Ren X."/>
            <person name="Souopgui J."/>
            <person name="Bellefroid E.J."/>
        </authorList>
    </citation>
    <scope>FUNCTION</scope>
</reference>
<proteinExistence type="evidence at protein level"/>
<dbReference type="EMBL" id="AB017701">
    <property type="protein sequence ID" value="BAA86061.1"/>
    <property type="molecule type" value="mRNA"/>
</dbReference>
<dbReference type="EMBL" id="BC169718">
    <property type="protein sequence ID" value="AAI69718.1"/>
    <property type="molecule type" value="mRNA"/>
</dbReference>
<dbReference type="EMBL" id="BC169720">
    <property type="protein sequence ID" value="AAI69720.1"/>
    <property type="molecule type" value="mRNA"/>
</dbReference>
<dbReference type="RefSeq" id="NP_001090202.1">
    <property type="nucleotide sequence ID" value="NM_001096733.1"/>
</dbReference>
<dbReference type="SMR" id="Q9PVX8"/>
<dbReference type="iPTMnet" id="Q9PVX8"/>
<dbReference type="GeneID" id="779100"/>
<dbReference type="KEGG" id="xla:779100"/>
<dbReference type="AGR" id="Xenbase:XB-GENE-865436"/>
<dbReference type="CTD" id="779100"/>
<dbReference type="Xenbase" id="XB-GENE-865436">
    <property type="gene designation" value="stat3.L"/>
</dbReference>
<dbReference type="OMA" id="DSLMHTE"/>
<dbReference type="OrthoDB" id="19300at2759"/>
<dbReference type="Proteomes" id="UP000186698">
    <property type="component" value="Chromosome 9_10L"/>
</dbReference>
<dbReference type="Bgee" id="779100">
    <property type="expression patterns" value="Expressed in egg cell and 19 other cell types or tissues"/>
</dbReference>
<dbReference type="GO" id="GO:0005737">
    <property type="term" value="C:cytoplasm"/>
    <property type="evidence" value="ECO:0000250"/>
    <property type="project" value="UniProtKB"/>
</dbReference>
<dbReference type="GO" id="GO:0005634">
    <property type="term" value="C:nucleus"/>
    <property type="evidence" value="ECO:0000250"/>
    <property type="project" value="UniProtKB"/>
</dbReference>
<dbReference type="GO" id="GO:0005886">
    <property type="term" value="C:plasma membrane"/>
    <property type="evidence" value="ECO:0000250"/>
    <property type="project" value="UniProtKB"/>
</dbReference>
<dbReference type="GO" id="GO:0090575">
    <property type="term" value="C:RNA polymerase II transcription regulator complex"/>
    <property type="evidence" value="ECO:0000318"/>
    <property type="project" value="GO_Central"/>
</dbReference>
<dbReference type="GO" id="GO:0003677">
    <property type="term" value="F:DNA binding"/>
    <property type="evidence" value="ECO:0000250"/>
    <property type="project" value="UniProtKB"/>
</dbReference>
<dbReference type="GO" id="GO:0003700">
    <property type="term" value="F:DNA-binding transcription factor activity"/>
    <property type="evidence" value="ECO:0000250"/>
    <property type="project" value="UniProtKB"/>
</dbReference>
<dbReference type="GO" id="GO:0000981">
    <property type="term" value="F:DNA-binding transcription factor activity, RNA polymerase II-specific"/>
    <property type="evidence" value="ECO:0000318"/>
    <property type="project" value="GO_Central"/>
</dbReference>
<dbReference type="GO" id="GO:0046983">
    <property type="term" value="F:protein dimerization activity"/>
    <property type="evidence" value="ECO:0000250"/>
    <property type="project" value="UniProtKB"/>
</dbReference>
<dbReference type="GO" id="GO:0042803">
    <property type="term" value="F:protein homodimerization activity"/>
    <property type="evidence" value="ECO:0000250"/>
    <property type="project" value="UniProtKB"/>
</dbReference>
<dbReference type="GO" id="GO:0019901">
    <property type="term" value="F:protein kinase binding"/>
    <property type="evidence" value="ECO:0000353"/>
    <property type="project" value="UniProtKB"/>
</dbReference>
<dbReference type="GO" id="GO:0000978">
    <property type="term" value="F:RNA polymerase II cis-regulatory region sequence-specific DNA binding"/>
    <property type="evidence" value="ECO:0000318"/>
    <property type="project" value="GO_Central"/>
</dbReference>
<dbReference type="GO" id="GO:0043565">
    <property type="term" value="F:sequence-specific DNA binding"/>
    <property type="evidence" value="ECO:0000314"/>
    <property type="project" value="UniProtKB"/>
</dbReference>
<dbReference type="GO" id="GO:0007259">
    <property type="term" value="P:cell surface receptor signaling pathway via JAK-STAT"/>
    <property type="evidence" value="ECO:0000318"/>
    <property type="project" value="GO_Central"/>
</dbReference>
<dbReference type="GO" id="GO:0006952">
    <property type="term" value="P:defense response"/>
    <property type="evidence" value="ECO:0000318"/>
    <property type="project" value="GO_Central"/>
</dbReference>
<dbReference type="GO" id="GO:0042755">
    <property type="term" value="P:eating behavior"/>
    <property type="evidence" value="ECO:0000250"/>
    <property type="project" value="UniProtKB"/>
</dbReference>
<dbReference type="GO" id="GO:0001754">
    <property type="term" value="P:eye photoreceptor cell differentiation"/>
    <property type="evidence" value="ECO:0000250"/>
    <property type="project" value="UniProtKB"/>
</dbReference>
<dbReference type="GO" id="GO:0042593">
    <property type="term" value="P:glucose homeostasis"/>
    <property type="evidence" value="ECO:0000250"/>
    <property type="project" value="UniProtKB"/>
</dbReference>
<dbReference type="GO" id="GO:0060397">
    <property type="term" value="P:growth hormone receptor signaling pathway via JAK-STAT"/>
    <property type="evidence" value="ECO:0000250"/>
    <property type="project" value="UniProtKB"/>
</dbReference>
<dbReference type="GO" id="GO:0070102">
    <property type="term" value="P:interleukin-6-mediated signaling pathway"/>
    <property type="evidence" value="ECO:0000250"/>
    <property type="project" value="UniProtKB"/>
</dbReference>
<dbReference type="GO" id="GO:0033210">
    <property type="term" value="P:leptin-mediated signaling pathway"/>
    <property type="evidence" value="ECO:0000318"/>
    <property type="project" value="GO_Central"/>
</dbReference>
<dbReference type="GO" id="GO:0001707">
    <property type="term" value="P:mesoderm formation"/>
    <property type="evidence" value="ECO:0000315"/>
    <property type="project" value="UniProtKB"/>
</dbReference>
<dbReference type="GO" id="GO:0014033">
    <property type="term" value="P:neural crest cell differentiation"/>
    <property type="evidence" value="ECO:0000315"/>
    <property type="project" value="UniProtKB"/>
</dbReference>
<dbReference type="GO" id="GO:0045893">
    <property type="term" value="P:positive regulation of DNA-templated transcription"/>
    <property type="evidence" value="ECO:0000314"/>
    <property type="project" value="UniProtKB"/>
</dbReference>
<dbReference type="GO" id="GO:0042127">
    <property type="term" value="P:regulation of cell population proliferation"/>
    <property type="evidence" value="ECO:0000318"/>
    <property type="project" value="GO_Central"/>
</dbReference>
<dbReference type="GO" id="GO:0006357">
    <property type="term" value="P:regulation of transcription by RNA polymerase II"/>
    <property type="evidence" value="ECO:0000250"/>
    <property type="project" value="UniProtKB"/>
</dbReference>
<dbReference type="GO" id="GO:0043434">
    <property type="term" value="P:response to peptide hormone"/>
    <property type="evidence" value="ECO:0000318"/>
    <property type="project" value="GO_Central"/>
</dbReference>
<dbReference type="GO" id="GO:0019953">
    <property type="term" value="P:sexual reproduction"/>
    <property type="evidence" value="ECO:0000250"/>
    <property type="project" value="UniProtKB"/>
</dbReference>
<dbReference type="GO" id="GO:0001659">
    <property type="term" value="P:temperature homeostasis"/>
    <property type="evidence" value="ECO:0000250"/>
    <property type="project" value="UniProtKB"/>
</dbReference>
<dbReference type="CDD" id="cd10374">
    <property type="entry name" value="SH2_STAT3"/>
    <property type="match status" value="1"/>
</dbReference>
<dbReference type="CDD" id="cd16853">
    <property type="entry name" value="STAT3_CCD"/>
    <property type="match status" value="1"/>
</dbReference>
<dbReference type="CDD" id="cd16847">
    <property type="entry name" value="STAT3_DBD"/>
    <property type="match status" value="1"/>
</dbReference>
<dbReference type="FunFam" id="1.10.238.10:FF:000012">
    <property type="entry name" value="Signal transducer and activator of transcription"/>
    <property type="match status" value="1"/>
</dbReference>
<dbReference type="FunFam" id="1.10.532.10:FF:000001">
    <property type="entry name" value="Signal transducer and activator of transcription"/>
    <property type="match status" value="1"/>
</dbReference>
<dbReference type="FunFam" id="1.20.1050.20:FF:000003">
    <property type="entry name" value="Signal transducer and activator of transcription"/>
    <property type="match status" value="1"/>
</dbReference>
<dbReference type="FunFam" id="3.30.505.10:FF:000003">
    <property type="entry name" value="Signal transducer and activator of transcription"/>
    <property type="match status" value="1"/>
</dbReference>
<dbReference type="FunFam" id="2.60.40.630:FF:000012">
    <property type="entry name" value="Signal transducer and activator of transcription 3"/>
    <property type="match status" value="1"/>
</dbReference>
<dbReference type="Gene3D" id="1.10.238.10">
    <property type="entry name" value="EF-hand"/>
    <property type="match status" value="1"/>
</dbReference>
<dbReference type="Gene3D" id="3.30.505.10">
    <property type="entry name" value="SH2 domain"/>
    <property type="match status" value="1"/>
</dbReference>
<dbReference type="Gene3D" id="1.20.1050.20">
    <property type="entry name" value="STAT transcription factor, all-alpha domain"/>
    <property type="match status" value="1"/>
</dbReference>
<dbReference type="Gene3D" id="2.60.40.630">
    <property type="entry name" value="STAT transcription factor, DNA-binding domain"/>
    <property type="match status" value="1"/>
</dbReference>
<dbReference type="Gene3D" id="1.10.532.10">
    <property type="entry name" value="STAT transcription factor, N-terminal domain"/>
    <property type="match status" value="1"/>
</dbReference>
<dbReference type="InterPro" id="IPR008967">
    <property type="entry name" value="p53-like_TF_DNA-bd_sf"/>
</dbReference>
<dbReference type="InterPro" id="IPR000980">
    <property type="entry name" value="SH2"/>
</dbReference>
<dbReference type="InterPro" id="IPR036860">
    <property type="entry name" value="SH2_dom_sf"/>
</dbReference>
<dbReference type="InterPro" id="IPR001217">
    <property type="entry name" value="STAT"/>
</dbReference>
<dbReference type="InterPro" id="IPR035855">
    <property type="entry name" value="STAT3_SH2"/>
</dbReference>
<dbReference type="InterPro" id="IPR048988">
    <property type="entry name" value="STAT_linker"/>
</dbReference>
<dbReference type="InterPro" id="IPR036535">
    <property type="entry name" value="STAT_N_sf"/>
</dbReference>
<dbReference type="InterPro" id="IPR013800">
    <property type="entry name" value="STAT_TF_alpha"/>
</dbReference>
<dbReference type="InterPro" id="IPR015988">
    <property type="entry name" value="STAT_TF_coiled-coil"/>
</dbReference>
<dbReference type="InterPro" id="IPR013801">
    <property type="entry name" value="STAT_TF_DNA-bd"/>
</dbReference>
<dbReference type="InterPro" id="IPR012345">
    <property type="entry name" value="STAT_TF_DNA-bd_N"/>
</dbReference>
<dbReference type="InterPro" id="IPR013799">
    <property type="entry name" value="STAT_TF_prot_interaction"/>
</dbReference>
<dbReference type="PANTHER" id="PTHR11801">
    <property type="entry name" value="SIGNAL TRANSDUCER AND ACTIVATOR OF TRANSCRIPTION"/>
    <property type="match status" value="1"/>
</dbReference>
<dbReference type="Pfam" id="PF00017">
    <property type="entry name" value="SH2"/>
    <property type="match status" value="1"/>
</dbReference>
<dbReference type="Pfam" id="PF01017">
    <property type="entry name" value="STAT_alpha"/>
    <property type="match status" value="1"/>
</dbReference>
<dbReference type="Pfam" id="PF02864">
    <property type="entry name" value="STAT_bind"/>
    <property type="match status" value="1"/>
</dbReference>
<dbReference type="Pfam" id="PF02865">
    <property type="entry name" value="STAT_int"/>
    <property type="match status" value="1"/>
</dbReference>
<dbReference type="Pfam" id="PF21354">
    <property type="entry name" value="STAT_linker"/>
    <property type="match status" value="1"/>
</dbReference>
<dbReference type="SMART" id="SM00964">
    <property type="entry name" value="STAT_int"/>
    <property type="match status" value="1"/>
</dbReference>
<dbReference type="SUPFAM" id="SSF49417">
    <property type="entry name" value="p53-like transcription factors"/>
    <property type="match status" value="1"/>
</dbReference>
<dbReference type="SUPFAM" id="SSF55550">
    <property type="entry name" value="SH2 domain"/>
    <property type="match status" value="1"/>
</dbReference>
<dbReference type="SUPFAM" id="SSF47655">
    <property type="entry name" value="STAT"/>
    <property type="match status" value="1"/>
</dbReference>
<dbReference type="SUPFAM" id="SSF48092">
    <property type="entry name" value="Transcription factor STAT-4 N-domain"/>
    <property type="match status" value="1"/>
</dbReference>
<dbReference type="PROSITE" id="PS50001">
    <property type="entry name" value="SH2"/>
    <property type="match status" value="1"/>
</dbReference>
<organism>
    <name type="scientific">Xenopus laevis</name>
    <name type="common">African clawed frog</name>
    <dbReference type="NCBI Taxonomy" id="8355"/>
    <lineage>
        <taxon>Eukaryota</taxon>
        <taxon>Metazoa</taxon>
        <taxon>Chordata</taxon>
        <taxon>Craniata</taxon>
        <taxon>Vertebrata</taxon>
        <taxon>Euteleostomi</taxon>
        <taxon>Amphibia</taxon>
        <taxon>Batrachia</taxon>
        <taxon>Anura</taxon>
        <taxon>Pipoidea</taxon>
        <taxon>Pipidae</taxon>
        <taxon>Xenopodinae</taxon>
        <taxon>Xenopus</taxon>
        <taxon>Xenopus</taxon>
    </lineage>
</organism>
<sequence length="769" mass="87975">MAQWNQLQQLDTRYLEQLHQLYSDSFPMELRQFLAPWIESQDWAFAASKESHATLVFHNLLGEIDQQYSRFLQESNVLYQHNLRRIKQFLQSRYLEKPMEIARIVARCLWEEGRLLQTAAAAAQQGGPASHPNAAVVTEKQQMLEQHLQDVRKKVQDLEQKMKVVENLQDDFDFNYKTLKSQSDLSELNGNNQSVTRQKMQQLEQMLTALDQLRRTIISDLASLLSAMEYVQKTLTDEELADWKRRQQIACIGGPPNICLDRLENWITSLAESQLQIRQQIKKLEELQQKVSYKGDPIVQHRPMLEERIVELFRNLMKSAFVVERQPCMPMHPDRPLVIKTGVQFTNKVRLLVKFPELNYQLKIKVCIDKDSGDVAALRGSRKFNILGTNTKVMNMEESNNGSLSAEFKHLTLREQRCGNGGRANCDASLIVTEELHLITFETEVYHQGLKIDLETHSLPVVVISNICQMPNAWASILWYNMLTNNPKNVNFFTKPPIGTWDQVAEVLSWQFSSTTKRGLSIEQLTTLAEKLLGPGVNYSGCQITWAKFCKENMAGKGFSFWVWLDNIIDLVKKYILALWNEGYIMGFISKERERAILSTKPPGTFLLRFSESSKEGGITFTWVEKDISGKTQIQSVEPYTKQQLNNMSFAEIIMGYKIMDATNILVSPLVYLYPDIPKEEAFGKYCRPESQEHQEPTDPGSTAPYLKTKFICVTPTTCSSTLDLPMSPRTLDSLMQFPGEGADSSAGNQFETLTFDMELTSECASSPM</sequence>
<gene>
    <name type="primary">stat3.1</name>
    <name evidence="8" type="synonym">stat3</name>
</gene>
<feature type="chain" id="PRO_0000370237" description="Signal transducer and activator of transcription 3.1">
    <location>
        <begin position="1"/>
        <end position="769"/>
    </location>
</feature>
<feature type="domain" description="SH2" evidence="4">
    <location>
        <begin position="580"/>
        <end position="670"/>
    </location>
</feature>
<feature type="short sequence motif" description="Essential for nuclear import" evidence="1">
    <location>
        <begin position="150"/>
        <end position="162"/>
    </location>
</feature>
<feature type="modified residue" description="Phosphoserine; by NLK" evidence="6">
    <location>
        <position position="728"/>
    </location>
</feature>
<feature type="mutagenesis site" description="Does not induce t/bra expression; when associated A-728. Induces t/bra expression; when associated with E-728." evidence="6">
    <original>ATN</original>
    <variation>CTC</variation>
    <location>
        <begin position="662"/>
        <end position="664"/>
    </location>
</feature>
<feature type="mutagenesis site" description="Inhibits t/bra expression and mesoderm induction." evidence="6">
    <original>Y</original>
    <variation>F</variation>
    <location>
        <position position="706"/>
    </location>
</feature>
<feature type="mutagenesis site" description="Inhibits t/bra expression and mesoderm induction." evidence="6">
    <original>S</original>
    <variation>A</variation>
    <location>
        <position position="728"/>
    </location>
</feature>
<feature type="mutagenesis site" description="Induces t/bra expression; when associated with 662-CTC-664." evidence="6">
    <original>S</original>
    <variation>E</variation>
    <location>
        <position position="728"/>
    </location>
</feature>
<protein>
    <recommendedName>
        <fullName>Signal transducer and activator of transcription 3.1</fullName>
    </recommendedName>
    <alternativeName>
        <fullName evidence="2">Protein Stat3</fullName>
        <shortName evidence="8">Xstat3</shortName>
    </alternativeName>
</protein>
<accession>Q9PVX8</accession>